<comment type="similarity">
    <text evidence="1">Belongs to the UPF0149 family.</text>
</comment>
<dbReference type="EMBL" id="CP001396">
    <property type="protein sequence ID" value="ACR64918.1"/>
    <property type="molecule type" value="Genomic_DNA"/>
</dbReference>
<dbReference type="RefSeq" id="WP_001295378.1">
    <property type="nucleotide sequence ID" value="NC_012759.1"/>
</dbReference>
<dbReference type="SMR" id="C5A0I1"/>
<dbReference type="GeneID" id="93779092"/>
<dbReference type="KEGG" id="ebw:BWG_2634"/>
<dbReference type="HOGENOM" id="CLU_085336_1_0_6"/>
<dbReference type="GO" id="GO:0005829">
    <property type="term" value="C:cytosol"/>
    <property type="evidence" value="ECO:0007669"/>
    <property type="project" value="TreeGrafter"/>
</dbReference>
<dbReference type="FunFam" id="1.20.120.740:FF:000001">
    <property type="entry name" value="UPF0149 protein YgfB"/>
    <property type="match status" value="1"/>
</dbReference>
<dbReference type="Gene3D" id="1.20.120.740">
    <property type="entry name" value="YgfB uncharacterised protein family UPF0149, PF03695"/>
    <property type="match status" value="1"/>
</dbReference>
<dbReference type="HAMAP" id="MF_00346">
    <property type="entry name" value="UPF0149"/>
    <property type="match status" value="1"/>
</dbReference>
<dbReference type="InterPro" id="IPR011978">
    <property type="entry name" value="YgfB-like"/>
</dbReference>
<dbReference type="InterPro" id="IPR036255">
    <property type="entry name" value="YgfB-like_sf"/>
</dbReference>
<dbReference type="NCBIfam" id="NF002477">
    <property type="entry name" value="PRK01736.1"/>
    <property type="match status" value="1"/>
</dbReference>
<dbReference type="NCBIfam" id="TIGR02292">
    <property type="entry name" value="ygfB_yecA"/>
    <property type="match status" value="1"/>
</dbReference>
<dbReference type="PANTHER" id="PTHR37528">
    <property type="entry name" value="UPF0149 PROTEIN YGFB"/>
    <property type="match status" value="1"/>
</dbReference>
<dbReference type="PANTHER" id="PTHR37528:SF1">
    <property type="entry name" value="UPF0149 PROTEIN YGFB"/>
    <property type="match status" value="1"/>
</dbReference>
<dbReference type="Pfam" id="PF03695">
    <property type="entry name" value="UPF0149"/>
    <property type="match status" value="1"/>
</dbReference>
<dbReference type="SUPFAM" id="SSF101327">
    <property type="entry name" value="YgfB-like"/>
    <property type="match status" value="1"/>
</dbReference>
<protein>
    <recommendedName>
        <fullName evidence="1">UPF0149 protein YgfB</fullName>
    </recommendedName>
</protein>
<feature type="chain" id="PRO_1000205321" description="UPF0149 protein YgfB">
    <location>
        <begin position="1"/>
        <end position="192"/>
    </location>
</feature>
<name>YGFB_ECOBW</name>
<proteinExistence type="inferred from homology"/>
<accession>C5A0I1</accession>
<reference key="1">
    <citation type="journal article" date="2009" name="J. Bacteriol.">
        <title>Genomic sequencing reveals regulatory mutations and recombinational events in the widely used MC4100 lineage of Escherichia coli K-12.</title>
        <authorList>
            <person name="Ferenci T."/>
            <person name="Zhou Z."/>
            <person name="Betteridge T."/>
            <person name="Ren Y."/>
            <person name="Liu Y."/>
            <person name="Feng L."/>
            <person name="Reeves P.R."/>
            <person name="Wang L."/>
        </authorList>
    </citation>
    <scope>NUCLEOTIDE SEQUENCE [LARGE SCALE GENOMIC DNA]</scope>
    <source>
        <strain>K12 / MC4100 / BW2952</strain>
    </source>
</reference>
<gene>
    <name evidence="1" type="primary">ygfB</name>
    <name type="ordered locus">BWG_2634</name>
</gene>
<sequence>MSIQNEMPGYNEMNQYLNQQGTGLTPAEMHGLISGMICGGNDDSSWLPLLHDLTNEGMAFGHELAQALRKMHSATSDALQDDGFLFQLYLPDGDDVSVFDRADALAGWVNHFLLGLGVTQPKLDKVTGETGEAIDDLRNIAQLGYDEDEDQEELEMSLEEIIEYVRVAALLCHDTFTHPQPTAPEVQKPTLH</sequence>
<evidence type="ECO:0000255" key="1">
    <source>
        <dbReference type="HAMAP-Rule" id="MF_00346"/>
    </source>
</evidence>
<organism>
    <name type="scientific">Escherichia coli (strain K12 / MC4100 / BW2952)</name>
    <dbReference type="NCBI Taxonomy" id="595496"/>
    <lineage>
        <taxon>Bacteria</taxon>
        <taxon>Pseudomonadati</taxon>
        <taxon>Pseudomonadota</taxon>
        <taxon>Gammaproteobacteria</taxon>
        <taxon>Enterobacterales</taxon>
        <taxon>Enterobacteriaceae</taxon>
        <taxon>Escherichia</taxon>
    </lineage>
</organism>